<dbReference type="EC" id="5.3.1.1" evidence="1"/>
<dbReference type="EMBL" id="CU928163">
    <property type="protein sequence ID" value="CAR15573.1"/>
    <property type="molecule type" value="Genomic_DNA"/>
</dbReference>
<dbReference type="RefSeq" id="WP_001216325.1">
    <property type="nucleotide sequence ID" value="NC_011751.1"/>
</dbReference>
<dbReference type="RefSeq" id="YP_002415062.1">
    <property type="nucleotide sequence ID" value="NC_011751.1"/>
</dbReference>
<dbReference type="SMR" id="B7NFL6"/>
<dbReference type="STRING" id="585056.ECUMN_4447"/>
<dbReference type="GeneID" id="93777979"/>
<dbReference type="KEGG" id="eum:ECUMN_4447"/>
<dbReference type="PATRIC" id="fig|585056.7.peg.4617"/>
<dbReference type="HOGENOM" id="CLU_024251_2_1_6"/>
<dbReference type="UniPathway" id="UPA00109">
    <property type="reaction ID" value="UER00189"/>
</dbReference>
<dbReference type="UniPathway" id="UPA00138"/>
<dbReference type="Proteomes" id="UP000007097">
    <property type="component" value="Chromosome"/>
</dbReference>
<dbReference type="GO" id="GO:0005829">
    <property type="term" value="C:cytosol"/>
    <property type="evidence" value="ECO:0007669"/>
    <property type="project" value="TreeGrafter"/>
</dbReference>
<dbReference type="GO" id="GO:0004807">
    <property type="term" value="F:triose-phosphate isomerase activity"/>
    <property type="evidence" value="ECO:0007669"/>
    <property type="project" value="UniProtKB-UniRule"/>
</dbReference>
<dbReference type="GO" id="GO:0006094">
    <property type="term" value="P:gluconeogenesis"/>
    <property type="evidence" value="ECO:0007669"/>
    <property type="project" value="UniProtKB-UniRule"/>
</dbReference>
<dbReference type="GO" id="GO:0046166">
    <property type="term" value="P:glyceraldehyde-3-phosphate biosynthetic process"/>
    <property type="evidence" value="ECO:0007669"/>
    <property type="project" value="TreeGrafter"/>
</dbReference>
<dbReference type="GO" id="GO:0019563">
    <property type="term" value="P:glycerol catabolic process"/>
    <property type="evidence" value="ECO:0007669"/>
    <property type="project" value="TreeGrafter"/>
</dbReference>
<dbReference type="GO" id="GO:0006096">
    <property type="term" value="P:glycolytic process"/>
    <property type="evidence" value="ECO:0007669"/>
    <property type="project" value="UniProtKB-UniRule"/>
</dbReference>
<dbReference type="CDD" id="cd00311">
    <property type="entry name" value="TIM"/>
    <property type="match status" value="1"/>
</dbReference>
<dbReference type="FunFam" id="3.20.20.70:FF:000020">
    <property type="entry name" value="Triosephosphate isomerase"/>
    <property type="match status" value="1"/>
</dbReference>
<dbReference type="Gene3D" id="3.20.20.70">
    <property type="entry name" value="Aldolase class I"/>
    <property type="match status" value="1"/>
</dbReference>
<dbReference type="HAMAP" id="MF_00147_B">
    <property type="entry name" value="TIM_B"/>
    <property type="match status" value="1"/>
</dbReference>
<dbReference type="InterPro" id="IPR013785">
    <property type="entry name" value="Aldolase_TIM"/>
</dbReference>
<dbReference type="InterPro" id="IPR035990">
    <property type="entry name" value="TIM_sf"/>
</dbReference>
<dbReference type="InterPro" id="IPR022896">
    <property type="entry name" value="TrioseP_Isoase_bac/euk"/>
</dbReference>
<dbReference type="InterPro" id="IPR000652">
    <property type="entry name" value="Triosephosphate_isomerase"/>
</dbReference>
<dbReference type="InterPro" id="IPR020861">
    <property type="entry name" value="Triosephosphate_isomerase_AS"/>
</dbReference>
<dbReference type="NCBIfam" id="TIGR00419">
    <property type="entry name" value="tim"/>
    <property type="match status" value="1"/>
</dbReference>
<dbReference type="PANTHER" id="PTHR21139">
    <property type="entry name" value="TRIOSEPHOSPHATE ISOMERASE"/>
    <property type="match status" value="1"/>
</dbReference>
<dbReference type="PANTHER" id="PTHR21139:SF42">
    <property type="entry name" value="TRIOSEPHOSPHATE ISOMERASE"/>
    <property type="match status" value="1"/>
</dbReference>
<dbReference type="Pfam" id="PF00121">
    <property type="entry name" value="TIM"/>
    <property type="match status" value="1"/>
</dbReference>
<dbReference type="SUPFAM" id="SSF51351">
    <property type="entry name" value="Triosephosphate isomerase (TIM)"/>
    <property type="match status" value="1"/>
</dbReference>
<dbReference type="PROSITE" id="PS00171">
    <property type="entry name" value="TIM_1"/>
    <property type="match status" value="1"/>
</dbReference>
<dbReference type="PROSITE" id="PS51440">
    <property type="entry name" value="TIM_2"/>
    <property type="match status" value="1"/>
</dbReference>
<reference key="1">
    <citation type="journal article" date="2009" name="PLoS Genet.">
        <title>Organised genome dynamics in the Escherichia coli species results in highly diverse adaptive paths.</title>
        <authorList>
            <person name="Touchon M."/>
            <person name="Hoede C."/>
            <person name="Tenaillon O."/>
            <person name="Barbe V."/>
            <person name="Baeriswyl S."/>
            <person name="Bidet P."/>
            <person name="Bingen E."/>
            <person name="Bonacorsi S."/>
            <person name="Bouchier C."/>
            <person name="Bouvet O."/>
            <person name="Calteau A."/>
            <person name="Chiapello H."/>
            <person name="Clermont O."/>
            <person name="Cruveiller S."/>
            <person name="Danchin A."/>
            <person name="Diard M."/>
            <person name="Dossat C."/>
            <person name="Karoui M.E."/>
            <person name="Frapy E."/>
            <person name="Garry L."/>
            <person name="Ghigo J.M."/>
            <person name="Gilles A.M."/>
            <person name="Johnson J."/>
            <person name="Le Bouguenec C."/>
            <person name="Lescat M."/>
            <person name="Mangenot S."/>
            <person name="Martinez-Jehanne V."/>
            <person name="Matic I."/>
            <person name="Nassif X."/>
            <person name="Oztas S."/>
            <person name="Petit M.A."/>
            <person name="Pichon C."/>
            <person name="Rouy Z."/>
            <person name="Ruf C.S."/>
            <person name="Schneider D."/>
            <person name="Tourret J."/>
            <person name="Vacherie B."/>
            <person name="Vallenet D."/>
            <person name="Medigue C."/>
            <person name="Rocha E.P.C."/>
            <person name="Denamur E."/>
        </authorList>
    </citation>
    <scope>NUCLEOTIDE SEQUENCE [LARGE SCALE GENOMIC DNA]</scope>
    <source>
        <strain>UMN026 / ExPEC</strain>
    </source>
</reference>
<keyword id="KW-0963">Cytoplasm</keyword>
<keyword id="KW-0312">Gluconeogenesis</keyword>
<keyword id="KW-0324">Glycolysis</keyword>
<keyword id="KW-0413">Isomerase</keyword>
<sequence>MRHPLVMGNWKLNGSRHMVHELVSNLRKELAGVAGCAVAIAPPEMYIDMAKREAEGSHIMLGAQNVDLNLSGAFTGETSAAMLKDIGAQYIIIGHSERRTYHKESDELIAKKFAVLKEQGLTPVLCIGETEAENEAGKTEEVCARQIDAVLKTQGAAAFEGAVIAYEPVWAIGTGKSATPAQAQAVHKFIRDHIAKVDANIAEQVIIQYGGSVNASNAAELFAQPDIDGALVGGASLKADAFAVIVKAAEAAKQA</sequence>
<accession>B7NFL6</accession>
<proteinExistence type="inferred from homology"/>
<name>TPIS_ECOLU</name>
<organism>
    <name type="scientific">Escherichia coli O17:K52:H18 (strain UMN026 / ExPEC)</name>
    <dbReference type="NCBI Taxonomy" id="585056"/>
    <lineage>
        <taxon>Bacteria</taxon>
        <taxon>Pseudomonadati</taxon>
        <taxon>Pseudomonadota</taxon>
        <taxon>Gammaproteobacteria</taxon>
        <taxon>Enterobacterales</taxon>
        <taxon>Enterobacteriaceae</taxon>
        <taxon>Escherichia</taxon>
    </lineage>
</organism>
<gene>
    <name evidence="1" type="primary">tpiA</name>
    <name type="ordered locus">ECUMN_4447</name>
</gene>
<evidence type="ECO:0000255" key="1">
    <source>
        <dbReference type="HAMAP-Rule" id="MF_00147"/>
    </source>
</evidence>
<comment type="function">
    <text evidence="1">Involved in the gluconeogenesis. Catalyzes stereospecifically the conversion of dihydroxyacetone phosphate (DHAP) to D-glyceraldehyde-3-phosphate (G3P).</text>
</comment>
<comment type="catalytic activity">
    <reaction evidence="1">
        <text>D-glyceraldehyde 3-phosphate = dihydroxyacetone phosphate</text>
        <dbReference type="Rhea" id="RHEA:18585"/>
        <dbReference type="ChEBI" id="CHEBI:57642"/>
        <dbReference type="ChEBI" id="CHEBI:59776"/>
        <dbReference type="EC" id="5.3.1.1"/>
    </reaction>
</comment>
<comment type="pathway">
    <text evidence="1">Carbohydrate biosynthesis; gluconeogenesis.</text>
</comment>
<comment type="pathway">
    <text evidence="1">Carbohydrate degradation; glycolysis; D-glyceraldehyde 3-phosphate from glycerone phosphate: step 1/1.</text>
</comment>
<comment type="subunit">
    <text evidence="1">Homodimer.</text>
</comment>
<comment type="subcellular location">
    <subcellularLocation>
        <location evidence="1">Cytoplasm</location>
    </subcellularLocation>
</comment>
<comment type="similarity">
    <text evidence="1">Belongs to the triosephosphate isomerase family.</text>
</comment>
<protein>
    <recommendedName>
        <fullName evidence="1">Triosephosphate isomerase</fullName>
        <shortName evidence="1">TIM</shortName>
        <shortName evidence="1">TPI</shortName>
        <ecNumber evidence="1">5.3.1.1</ecNumber>
    </recommendedName>
    <alternativeName>
        <fullName evidence="1">Triose-phosphate isomerase</fullName>
    </alternativeName>
</protein>
<feature type="chain" id="PRO_1000196982" description="Triosephosphate isomerase">
    <location>
        <begin position="1"/>
        <end position="255"/>
    </location>
</feature>
<feature type="active site" description="Electrophile" evidence="1">
    <location>
        <position position="95"/>
    </location>
</feature>
<feature type="active site" description="Proton acceptor" evidence="1">
    <location>
        <position position="167"/>
    </location>
</feature>
<feature type="binding site" evidence="1">
    <location>
        <begin position="9"/>
        <end position="11"/>
    </location>
    <ligand>
        <name>substrate</name>
    </ligand>
</feature>
<feature type="binding site" evidence="1">
    <location>
        <position position="173"/>
    </location>
    <ligand>
        <name>substrate</name>
    </ligand>
</feature>
<feature type="binding site" evidence="1">
    <location>
        <position position="212"/>
    </location>
    <ligand>
        <name>substrate</name>
    </ligand>
</feature>
<feature type="binding site" evidence="1">
    <location>
        <begin position="233"/>
        <end position="234"/>
    </location>
    <ligand>
        <name>substrate</name>
    </ligand>
</feature>